<comment type="subcellular location">
    <subcellularLocation>
        <location evidence="2">Mitochondrion</location>
    </subcellularLocation>
</comment>
<dbReference type="EMBL" id="Y08501">
    <property type="protein sequence ID" value="CAA69777.1"/>
    <property type="molecule type" value="Genomic_DNA"/>
</dbReference>
<dbReference type="EMBL" id="BK010421">
    <property type="status" value="NOT_ANNOTATED_CDS"/>
    <property type="molecule type" value="Genomic_DNA"/>
</dbReference>
<dbReference type="RefSeq" id="NP_085502.1">
    <property type="nucleotide sequence ID" value="NC_001284.2"/>
</dbReference>
<dbReference type="iPTMnet" id="P93297"/>
<dbReference type="PaxDb" id="3702-ATMG00400.1"/>
<dbReference type="EnsemblPlants" id="ATMG00400.1">
    <property type="protein sequence ID" value="ATMG00400.1"/>
    <property type="gene ID" value="ATMG00400"/>
</dbReference>
<dbReference type="Gramene" id="ATMG00400.1">
    <property type="protein sequence ID" value="ATMG00400.1"/>
    <property type="gene ID" value="ATMG00400"/>
</dbReference>
<dbReference type="Araport" id="ATMG00400"/>
<dbReference type="TAIR" id="ATMG00400">
    <property type="gene designation" value="ORF157"/>
</dbReference>
<dbReference type="HOGENOM" id="CLU_1680339_0_0_1"/>
<dbReference type="InParanoid" id="P93297"/>
<dbReference type="PRO" id="PR:P93297"/>
<dbReference type="Proteomes" id="UP000006548">
    <property type="component" value="Mitochondrion MT"/>
</dbReference>
<dbReference type="GO" id="GO:0005739">
    <property type="term" value="C:mitochondrion"/>
    <property type="evidence" value="ECO:0007669"/>
    <property type="project" value="UniProtKB-SubCell"/>
</dbReference>
<keyword id="KW-0496">Mitochondrion</keyword>
<keyword id="KW-1185">Reference proteome</keyword>
<sequence>MGDLEGQDRPDPISTMVGPSGTGNLRLTSFQQVRRSILSQERRNPAPLATCTKKKLGRKEEPLLIPATINNYRRAIHLKNGARISLDVGLYFFRRARFGTLKQDMIYIIRHHRRLEIKVRFIALLIQACCRIVGYDYLFFYEVRNHLLLAALLIIIR</sequence>
<geneLocation type="mitochondrion"/>
<organism>
    <name type="scientific">Arabidopsis thaliana</name>
    <name type="common">Mouse-ear cress</name>
    <dbReference type="NCBI Taxonomy" id="3702"/>
    <lineage>
        <taxon>Eukaryota</taxon>
        <taxon>Viridiplantae</taxon>
        <taxon>Streptophyta</taxon>
        <taxon>Embryophyta</taxon>
        <taxon>Tracheophyta</taxon>
        <taxon>Spermatophyta</taxon>
        <taxon>Magnoliopsida</taxon>
        <taxon>eudicotyledons</taxon>
        <taxon>Gunneridae</taxon>
        <taxon>Pentapetalae</taxon>
        <taxon>rosids</taxon>
        <taxon>malvids</taxon>
        <taxon>Brassicales</taxon>
        <taxon>Brassicaceae</taxon>
        <taxon>Camelineae</taxon>
        <taxon>Arabidopsis</taxon>
    </lineage>
</organism>
<evidence type="ECO:0000256" key="1">
    <source>
        <dbReference type="SAM" id="MobiDB-lite"/>
    </source>
</evidence>
<evidence type="ECO:0000305" key="2"/>
<reference key="1">
    <citation type="journal article" date="1997" name="Nat. Genet.">
        <title>The mitochondrial genome of Arabidopsis thaliana contains 57 genes in 366,924 nucleotides.</title>
        <authorList>
            <person name="Unseld M."/>
            <person name="Marienfeld J.R."/>
            <person name="Brandt P."/>
            <person name="Brennicke A."/>
        </authorList>
    </citation>
    <scope>NUCLEOTIDE SEQUENCE [LARGE SCALE GENOMIC DNA]</scope>
    <source>
        <strain>cv. C24</strain>
    </source>
</reference>
<reference key="2">
    <citation type="journal article" date="2018" name="Plant Cell">
        <title>Correction of persistent errors in Arabidopsis reference mitochondrial genomes.</title>
        <authorList>
            <person name="Sloan D.B."/>
            <person name="Wu Z."/>
            <person name="Sharbrough J."/>
        </authorList>
    </citation>
    <scope>NUCLEOTIDE SEQUENCE [LARGE SCALE GENOMIC DNA]</scope>
    <source>
        <strain>cv. Columbia</strain>
    </source>
</reference>
<name>M400_ARATH</name>
<protein>
    <recommendedName>
        <fullName>Uncharacterized mitochondrial protein AtMg00400</fullName>
    </recommendedName>
    <alternativeName>
        <fullName>ORF157</fullName>
    </alternativeName>
</protein>
<accession>P93297</accession>
<proteinExistence type="predicted"/>
<feature type="chain" id="PRO_0000196768" description="Uncharacterized mitochondrial protein AtMg00400">
    <location>
        <begin position="1"/>
        <end position="157"/>
    </location>
</feature>
<feature type="region of interest" description="Disordered" evidence="1">
    <location>
        <begin position="1"/>
        <end position="22"/>
    </location>
</feature>
<feature type="compositionally biased region" description="Basic and acidic residues" evidence="1">
    <location>
        <begin position="1"/>
        <end position="11"/>
    </location>
</feature>
<gene>
    <name type="ordered locus">AtMg00400</name>
</gene>